<feature type="chain" id="PRO_0000421679" description="3beta-hydroxysteroid dehydrogenase dhs-16">
    <location>
        <begin position="1"/>
        <end position="388"/>
    </location>
</feature>
<feature type="transmembrane region" description="Helical" evidence="1">
    <location>
        <begin position="2"/>
        <end position="22"/>
    </location>
</feature>
<feature type="transmembrane region" description="Helical" evidence="1">
    <location>
        <begin position="300"/>
        <end position="320"/>
    </location>
</feature>
<feature type="transmembrane region" description="Helical" evidence="1">
    <location>
        <begin position="346"/>
        <end position="366"/>
    </location>
</feature>
<feature type="active site" description="Proton acceptor" evidence="2">
    <location>
        <position position="188"/>
    </location>
</feature>
<keyword id="KW-0153">Cholesterol metabolism</keyword>
<keyword id="KW-0443">Lipid metabolism</keyword>
<keyword id="KW-0472">Membrane</keyword>
<keyword id="KW-0560">Oxidoreductase</keyword>
<keyword id="KW-1185">Reference proteome</keyword>
<keyword id="KW-0753">Steroid metabolism</keyword>
<keyword id="KW-1207">Sterol metabolism</keyword>
<keyword id="KW-0812">Transmembrane</keyword>
<keyword id="KW-1133">Transmembrane helix</keyword>
<evidence type="ECO:0000255" key="1"/>
<evidence type="ECO:0000255" key="2">
    <source>
        <dbReference type="PROSITE-ProRule" id="PRU10001"/>
    </source>
</evidence>
<evidence type="ECO:0000269" key="3">
    <source>
    </source>
</evidence>
<evidence type="ECO:0000269" key="4">
    <source>
    </source>
</evidence>
<evidence type="ECO:0000305" key="5"/>
<sequence>MLELIYILPLLCFVYFLFRRFVLENFYVESSGKYVMITGCDSGFGRLLATSLLDKHVNVFAACFTQQGMASLHSEWKLKKGPKGQLYTLQLDVTSQASVDSAKSFVTKILKEQNSKLWGLVNNAGIFSIHGPDDWCSVDEYASSLNVNTLGAVRMCHAFVPLIKKSRGRIVTMGSTAGRLHGLYVAPYVTAKFAVEAYMDCLRLEMRPFGVSVHILEPGCFKTELLNNDAQRMRIQKIWNSLSVETKEEYGEDYRNDFERAWEAGVNVVANPNIGWVVDCYSHALFSWWPRLRYCPGWDAIFMFIPLSIFPTALQDWILAGLYKLNPGPSLTPAVLVKNKKRRSAIQWIQFLSQIAIIPLLYTIFFVKNTQKQTVETSTHHHNVTVSE</sequence>
<comment type="function">
    <text evidence="3 4">3beta-hydroxysteroid dehydrogenase that converts 3beta-hydroxysteroids to 3-ketosteroids, an essential step in the production of dafachronic acids from cholesterol. Catalyzes the dehydrogenation of lathosterol (5alpha-cholest-7-en-3beta-ol) to lathosterone (5alpha-cholest-7-en-3-one), a step required for maximal biosynthesis of Delta(7)-dafachronic acid (PubMed:22505847). Dafachronic acids act as ligands and bind directly to the nuclear hormone receptor (NHR) daf-12, suppressing dauer formation and inducing reproductive growth, they can also regulate C.elegans lifespan (PubMed:22505847, PubMed:22505849).</text>
</comment>
<comment type="catalytic activity">
    <reaction evidence="3">
        <text>lathosterol + NAD(+) = 5alpha-cholest-7-en-3-one + NADH + H(+)</text>
        <dbReference type="Rhea" id="RHEA:35463"/>
        <dbReference type="ChEBI" id="CHEBI:15378"/>
        <dbReference type="ChEBI" id="CHEBI:17168"/>
        <dbReference type="ChEBI" id="CHEBI:57540"/>
        <dbReference type="ChEBI" id="CHEBI:57945"/>
        <dbReference type="ChEBI" id="CHEBI:71550"/>
    </reaction>
    <physiologicalReaction direction="left-to-right" evidence="3">
        <dbReference type="Rhea" id="RHEA:35464"/>
    </physiologicalReaction>
</comment>
<comment type="pathway">
    <text evidence="3">Steroid hormone biosynthesis; dafachronic acid biosynthesis.</text>
</comment>
<comment type="subcellular location">
    <subcellularLocation>
        <location evidence="5">Membrane</location>
        <topology evidence="5">Multi-pass membrane protein</topology>
    </subcellularLocation>
</comment>
<comment type="tissue specificity">
    <text evidence="3">Strongly expressed in the hypodermis and posterior pharyngeal bulb and in a number of unidentified neurons of the head and tail.</text>
</comment>
<comment type="disruption phenotype">
    <text evidence="3">Mutants appear normal at 20 degrees Celsius but have Daf-c phenotypes (formation of dauer larvae at low population density in the presence of abundant food) at 27 degrees Celsius.</text>
</comment>
<comment type="similarity">
    <text evidence="5">Belongs to the short-chain dehydrogenases/reductases (SDR) family.</text>
</comment>
<protein>
    <recommendedName>
        <fullName>3beta-hydroxysteroid dehydrogenase dhs-16</fullName>
        <ecNumber evidence="3">1.1.1.-</ecNumber>
    </recommendedName>
</protein>
<name>DHS16_CAEEL</name>
<dbReference type="EC" id="1.1.1.-" evidence="3"/>
<dbReference type="EMBL" id="FO080493">
    <property type="protein sequence ID" value="CCD64121.1"/>
    <property type="molecule type" value="Genomic_DNA"/>
</dbReference>
<dbReference type="PIR" id="T32153">
    <property type="entry name" value="T32153"/>
</dbReference>
<dbReference type="RefSeq" id="NP_504554.1">
    <property type="nucleotide sequence ID" value="NM_072153.8"/>
</dbReference>
<dbReference type="SMR" id="O16881"/>
<dbReference type="FunCoup" id="O16881">
    <property type="interactions" value="58"/>
</dbReference>
<dbReference type="STRING" id="6239.C10F3.2.1"/>
<dbReference type="SwissLipids" id="SLP:000000077"/>
<dbReference type="SwissLipids" id="SLP:000000192"/>
<dbReference type="PaxDb" id="6239-C10F3.2"/>
<dbReference type="EnsemblMetazoa" id="C10F3.2.1">
    <property type="protein sequence ID" value="C10F3.2.1"/>
    <property type="gene ID" value="WBGene00000979"/>
</dbReference>
<dbReference type="GeneID" id="178983"/>
<dbReference type="KEGG" id="cel:CELE_C10F3.2"/>
<dbReference type="UCSC" id="C10F3.2">
    <property type="organism name" value="c. elegans"/>
</dbReference>
<dbReference type="AGR" id="WB:WBGene00000979"/>
<dbReference type="CTD" id="178983"/>
<dbReference type="WormBase" id="C10F3.2">
    <property type="protein sequence ID" value="CE08067"/>
    <property type="gene ID" value="WBGene00000979"/>
    <property type="gene designation" value="dhs-16"/>
</dbReference>
<dbReference type="eggNOG" id="KOG1610">
    <property type="taxonomic scope" value="Eukaryota"/>
</dbReference>
<dbReference type="GeneTree" id="ENSGT00940000165804"/>
<dbReference type="HOGENOM" id="CLU_010194_2_0_1"/>
<dbReference type="InParanoid" id="O16881"/>
<dbReference type="OMA" id="GFMYRWF"/>
<dbReference type="OrthoDB" id="2102561at2759"/>
<dbReference type="PhylomeDB" id="O16881"/>
<dbReference type="Reactome" id="R-CEL-5365859">
    <property type="pathway name" value="RA biosynthesis pathway"/>
</dbReference>
<dbReference type="UniPathway" id="UPA01020"/>
<dbReference type="PRO" id="PR:O16881"/>
<dbReference type="Proteomes" id="UP000001940">
    <property type="component" value="Chromosome V"/>
</dbReference>
<dbReference type="Bgee" id="WBGene00000979">
    <property type="expression patterns" value="Expressed in pharyngeal muscle cell (C elegans) and 3 other cell types or tissues"/>
</dbReference>
<dbReference type="GO" id="GO:0016020">
    <property type="term" value="C:membrane"/>
    <property type="evidence" value="ECO:0007669"/>
    <property type="project" value="UniProtKB-SubCell"/>
</dbReference>
<dbReference type="GO" id="GO:0016491">
    <property type="term" value="F:oxidoreductase activity"/>
    <property type="evidence" value="ECO:0000318"/>
    <property type="project" value="GO_Central"/>
</dbReference>
<dbReference type="GO" id="GO:0016229">
    <property type="term" value="F:steroid dehydrogenase activity"/>
    <property type="evidence" value="ECO:0000314"/>
    <property type="project" value="UniProtKB"/>
</dbReference>
<dbReference type="GO" id="GO:0008203">
    <property type="term" value="P:cholesterol metabolic process"/>
    <property type="evidence" value="ECO:0007669"/>
    <property type="project" value="UniProtKB-KW"/>
</dbReference>
<dbReference type="GO" id="GO:0006706">
    <property type="term" value="P:steroid catabolic process"/>
    <property type="evidence" value="ECO:0000314"/>
    <property type="project" value="UniProtKB"/>
</dbReference>
<dbReference type="GO" id="GO:0008202">
    <property type="term" value="P:steroid metabolic process"/>
    <property type="evidence" value="ECO:0000318"/>
    <property type="project" value="GO_Central"/>
</dbReference>
<dbReference type="FunFam" id="3.40.50.720:FF:000074">
    <property type="entry name" value="Retinol dehydrogenase type 1"/>
    <property type="match status" value="1"/>
</dbReference>
<dbReference type="Gene3D" id="3.40.50.720">
    <property type="entry name" value="NAD(P)-binding Rossmann-like Domain"/>
    <property type="match status" value="1"/>
</dbReference>
<dbReference type="InterPro" id="IPR036291">
    <property type="entry name" value="NAD(P)-bd_dom_sf"/>
</dbReference>
<dbReference type="InterPro" id="IPR020904">
    <property type="entry name" value="Sc_DH/Rdtase_CS"/>
</dbReference>
<dbReference type="InterPro" id="IPR002347">
    <property type="entry name" value="SDR_fam"/>
</dbReference>
<dbReference type="PANTHER" id="PTHR43313:SF1">
    <property type="entry name" value="3BETA-HYDROXYSTEROID DEHYDROGENASE DHS-16"/>
    <property type="match status" value="1"/>
</dbReference>
<dbReference type="PANTHER" id="PTHR43313">
    <property type="entry name" value="SHORT-CHAIN DEHYDROGENASE/REDUCTASE FAMILY 9C"/>
    <property type="match status" value="1"/>
</dbReference>
<dbReference type="Pfam" id="PF00106">
    <property type="entry name" value="adh_short"/>
    <property type="match status" value="1"/>
</dbReference>
<dbReference type="PRINTS" id="PR00081">
    <property type="entry name" value="GDHRDH"/>
</dbReference>
<dbReference type="SUPFAM" id="SSF51735">
    <property type="entry name" value="NAD(P)-binding Rossmann-fold domains"/>
    <property type="match status" value="1"/>
</dbReference>
<dbReference type="PROSITE" id="PS00061">
    <property type="entry name" value="ADH_SHORT"/>
    <property type="match status" value="1"/>
</dbReference>
<proteinExistence type="evidence at protein level"/>
<gene>
    <name type="primary">dhs-16</name>
    <name type="ORF">C10F3.2</name>
</gene>
<organism>
    <name type="scientific">Caenorhabditis elegans</name>
    <dbReference type="NCBI Taxonomy" id="6239"/>
    <lineage>
        <taxon>Eukaryota</taxon>
        <taxon>Metazoa</taxon>
        <taxon>Ecdysozoa</taxon>
        <taxon>Nematoda</taxon>
        <taxon>Chromadorea</taxon>
        <taxon>Rhabditida</taxon>
        <taxon>Rhabditina</taxon>
        <taxon>Rhabditomorpha</taxon>
        <taxon>Rhabditoidea</taxon>
        <taxon>Rhabditidae</taxon>
        <taxon>Peloderinae</taxon>
        <taxon>Caenorhabditis</taxon>
    </lineage>
</organism>
<reference key="1">
    <citation type="journal article" date="1998" name="Science">
        <title>Genome sequence of the nematode C. elegans: a platform for investigating biology.</title>
        <authorList>
            <consortium name="The C. elegans sequencing consortium"/>
        </authorList>
    </citation>
    <scope>NUCLEOTIDE SEQUENCE [LARGE SCALE GENOMIC DNA]</scope>
    <source>
        <strain>Bristol N2</strain>
    </source>
</reference>
<reference key="2">
    <citation type="journal article" date="2012" name="PLoS Biol.">
        <title>A novel 3-hydroxysteroid dehydrogenase that regulates reproductive development and longevity.</title>
        <authorList>
            <person name="Wollam J."/>
            <person name="Magner D.B."/>
            <person name="Magomedova L."/>
            <person name="Rass E."/>
            <person name="Shen Y."/>
            <person name="Rottiers V."/>
            <person name="Habermann B."/>
            <person name="Cummins C.L."/>
            <person name="Antebi A."/>
        </authorList>
    </citation>
    <scope>FUNCTION</scope>
    <scope>CATALYTIC ACTIVITY</scope>
    <scope>PATHWAY</scope>
    <scope>TISSUE SPECIFICITY</scope>
    <scope>DISRUPTION PHENOTYPE</scope>
</reference>
<reference key="3">
    <citation type="journal article" date="2012" name="PLoS Biol.">
        <title>Steroids as central regulators of organismal development and lifespan.</title>
        <authorList>
            <person name="Lee S.S."/>
            <person name="Schroeder F.C."/>
        </authorList>
    </citation>
    <scope>FUNCTION</scope>
</reference>
<accession>O16881</accession>